<proteinExistence type="evidence at protein level"/>
<reference key="1">
    <citation type="submission" date="2004-11" db="EMBL/GenBank/DDBJ databases">
        <title>Complete genome sequence of Thermus thermophilus HB8.</title>
        <authorList>
            <person name="Masui R."/>
            <person name="Kurokawa K."/>
            <person name="Nakagawa N."/>
            <person name="Tokunaga F."/>
            <person name="Koyama Y."/>
            <person name="Shibata T."/>
            <person name="Oshima T."/>
            <person name="Yokoyama S."/>
            <person name="Yasunaga T."/>
            <person name="Kuramitsu S."/>
        </authorList>
    </citation>
    <scope>NUCLEOTIDE SEQUENCE [LARGE SCALE GENOMIC DNA]</scope>
    <source>
        <strain>ATCC 27634 / DSM 579 / HB8</strain>
    </source>
</reference>
<name>SYR_THET8</name>
<sequence>MLRRALEEAIAQALKEMGVPVRLKVARAPKDKPGDYGVPLFALAKELRKPPQAIAQELKDRLPLPEFVEEAVPVGGYLNFRLRTEALLREALRPKAPFPRRPGVVLVEHTSVNPNKELHVGHLRNIALGDAIARILAYAGREVLVLNYIDDTGRQAAETLFALRHYGLTWDGKEKYDHFAGRAYVRLHQDPEYERLQPAIEEVLHALERGELREEVNRILLAQMATMHALNARYDLLVWESDIVRAGLLQKALALLEQSPHVFRPREGKYAGALVMDASPVIPGLEDPFFVLLRSNGTATYYAKDIAFQFWKMGILEGLRFRPYENPYYPGLRTSAPEGEAYTPKAEETINVVDVRQSHPQALVRAALALAGYPALAEKAHHLAYETVLLEGRQMSGRKGLAVSVDEVLEEATRRARAIVEEKNPDHPDKEEAARMVALGAIRFSMVKTEPKKQIDFRYQEALSFEGDTGPYVQYAHARAHSILRKAGEWGAPDLSQATPYERALALDLLDFEEAVLEAAEERTPHVLAQYLLDLAASWNAYYNARENGQPATPVLTAPEGLRELRLSLVQSLQRTLATGLDLLGIPAPEVM</sequence>
<evidence type="ECO:0000255" key="1">
    <source>
        <dbReference type="HAMAP-Rule" id="MF_00123"/>
    </source>
</evidence>
<feature type="chain" id="PRO_0000242112" description="Arginine--tRNA ligase">
    <location>
        <begin position="1"/>
        <end position="592"/>
    </location>
</feature>
<feature type="short sequence motif" description="'HIGH' region">
    <location>
        <begin position="112"/>
        <end position="122"/>
    </location>
</feature>
<keyword id="KW-0002">3D-structure</keyword>
<keyword id="KW-0030">Aminoacyl-tRNA synthetase</keyword>
<keyword id="KW-0067">ATP-binding</keyword>
<keyword id="KW-0963">Cytoplasm</keyword>
<keyword id="KW-0436">Ligase</keyword>
<keyword id="KW-0547">Nucleotide-binding</keyword>
<keyword id="KW-0648">Protein biosynthesis</keyword>
<keyword id="KW-1185">Reference proteome</keyword>
<protein>
    <recommendedName>
        <fullName evidence="1">Arginine--tRNA ligase</fullName>
        <ecNumber evidence="1">6.1.1.19</ecNumber>
    </recommendedName>
    <alternativeName>
        <fullName evidence="1">Arginyl-tRNA synthetase</fullName>
        <shortName evidence="1">ArgRS</shortName>
    </alternativeName>
</protein>
<comment type="catalytic activity">
    <reaction evidence="1">
        <text>tRNA(Arg) + L-arginine + ATP = L-arginyl-tRNA(Arg) + AMP + diphosphate</text>
        <dbReference type="Rhea" id="RHEA:20301"/>
        <dbReference type="Rhea" id="RHEA-COMP:9658"/>
        <dbReference type="Rhea" id="RHEA-COMP:9673"/>
        <dbReference type="ChEBI" id="CHEBI:30616"/>
        <dbReference type="ChEBI" id="CHEBI:32682"/>
        <dbReference type="ChEBI" id="CHEBI:33019"/>
        <dbReference type="ChEBI" id="CHEBI:78442"/>
        <dbReference type="ChEBI" id="CHEBI:78513"/>
        <dbReference type="ChEBI" id="CHEBI:456215"/>
        <dbReference type="EC" id="6.1.1.19"/>
    </reaction>
</comment>
<comment type="subunit">
    <text evidence="1">Monomer.</text>
</comment>
<comment type="subcellular location">
    <subcellularLocation>
        <location evidence="1">Cytoplasm</location>
    </subcellularLocation>
</comment>
<comment type="similarity">
    <text evidence="1">Belongs to the class-I aminoacyl-tRNA synthetase family.</text>
</comment>
<dbReference type="EC" id="6.1.1.19" evidence="1"/>
<dbReference type="EMBL" id="AP008226">
    <property type="protein sequence ID" value="BAD69921.1"/>
    <property type="molecule type" value="Genomic_DNA"/>
</dbReference>
<dbReference type="RefSeq" id="WP_011227708.1">
    <property type="nucleotide sequence ID" value="NC_006461.1"/>
</dbReference>
<dbReference type="RefSeq" id="YP_143364.1">
    <property type="nucleotide sequence ID" value="NC_006461.1"/>
</dbReference>
<dbReference type="PDB" id="1IQ0">
    <property type="method" value="X-ray"/>
    <property type="resolution" value="2.30 A"/>
    <property type="chains" value="A=1-592"/>
</dbReference>
<dbReference type="PDBsum" id="1IQ0"/>
<dbReference type="SMR" id="Q5SM45"/>
<dbReference type="EnsemblBacteria" id="BAD69921">
    <property type="protein sequence ID" value="BAD69921"/>
    <property type="gene ID" value="BAD69921"/>
</dbReference>
<dbReference type="GeneID" id="3169614"/>
<dbReference type="KEGG" id="ttj:TTHA0098"/>
<dbReference type="eggNOG" id="COG0018">
    <property type="taxonomic scope" value="Bacteria"/>
</dbReference>
<dbReference type="HOGENOM" id="CLU_006406_6_1_0"/>
<dbReference type="PhylomeDB" id="Q5SM45"/>
<dbReference type="Proteomes" id="UP000000532">
    <property type="component" value="Chromosome"/>
</dbReference>
<dbReference type="GO" id="GO:0005737">
    <property type="term" value="C:cytoplasm"/>
    <property type="evidence" value="ECO:0007669"/>
    <property type="project" value="UniProtKB-SubCell"/>
</dbReference>
<dbReference type="GO" id="GO:0004814">
    <property type="term" value="F:arginine-tRNA ligase activity"/>
    <property type="evidence" value="ECO:0007669"/>
    <property type="project" value="UniProtKB-UniRule"/>
</dbReference>
<dbReference type="GO" id="GO:0005524">
    <property type="term" value="F:ATP binding"/>
    <property type="evidence" value="ECO:0007669"/>
    <property type="project" value="UniProtKB-UniRule"/>
</dbReference>
<dbReference type="GO" id="GO:0006420">
    <property type="term" value="P:arginyl-tRNA aminoacylation"/>
    <property type="evidence" value="ECO:0007669"/>
    <property type="project" value="UniProtKB-UniRule"/>
</dbReference>
<dbReference type="CDD" id="cd07956">
    <property type="entry name" value="Anticodon_Ia_Arg"/>
    <property type="match status" value="1"/>
</dbReference>
<dbReference type="FunFam" id="3.40.50.620:FF:000190">
    <property type="entry name" value="Arginine--tRNA ligase"/>
    <property type="match status" value="1"/>
</dbReference>
<dbReference type="Gene3D" id="3.30.1360.70">
    <property type="entry name" value="Arginyl tRNA synthetase N-terminal domain"/>
    <property type="match status" value="1"/>
</dbReference>
<dbReference type="Gene3D" id="3.40.50.620">
    <property type="entry name" value="HUPs"/>
    <property type="match status" value="1"/>
</dbReference>
<dbReference type="Gene3D" id="1.10.730.10">
    <property type="entry name" value="Isoleucyl-tRNA Synthetase, Domain 1"/>
    <property type="match status" value="1"/>
</dbReference>
<dbReference type="HAMAP" id="MF_00123">
    <property type="entry name" value="Arg_tRNA_synth"/>
    <property type="match status" value="1"/>
</dbReference>
<dbReference type="InterPro" id="IPR001412">
    <property type="entry name" value="aa-tRNA-synth_I_CS"/>
</dbReference>
<dbReference type="InterPro" id="IPR001278">
    <property type="entry name" value="Arg-tRNA-ligase"/>
</dbReference>
<dbReference type="InterPro" id="IPR005148">
    <property type="entry name" value="Arg-tRNA-synth_N"/>
</dbReference>
<dbReference type="InterPro" id="IPR036695">
    <property type="entry name" value="Arg-tRNA-synth_N_sf"/>
</dbReference>
<dbReference type="InterPro" id="IPR035684">
    <property type="entry name" value="ArgRS_core"/>
</dbReference>
<dbReference type="InterPro" id="IPR008909">
    <property type="entry name" value="DALR_anticod-bd"/>
</dbReference>
<dbReference type="InterPro" id="IPR014729">
    <property type="entry name" value="Rossmann-like_a/b/a_fold"/>
</dbReference>
<dbReference type="InterPro" id="IPR009080">
    <property type="entry name" value="tRNAsynth_Ia_anticodon-bd"/>
</dbReference>
<dbReference type="NCBIfam" id="NF002447">
    <property type="entry name" value="PRK01611.3-4"/>
    <property type="match status" value="1"/>
</dbReference>
<dbReference type="PANTHER" id="PTHR11956:SF5">
    <property type="entry name" value="ARGININE--TRNA LIGASE, CYTOPLASMIC"/>
    <property type="match status" value="1"/>
</dbReference>
<dbReference type="PANTHER" id="PTHR11956">
    <property type="entry name" value="ARGINYL-TRNA SYNTHETASE"/>
    <property type="match status" value="1"/>
</dbReference>
<dbReference type="Pfam" id="PF03485">
    <property type="entry name" value="Arg_tRNA_synt_N"/>
    <property type="match status" value="1"/>
</dbReference>
<dbReference type="Pfam" id="PF05746">
    <property type="entry name" value="DALR_1"/>
    <property type="match status" value="1"/>
</dbReference>
<dbReference type="Pfam" id="PF00750">
    <property type="entry name" value="tRNA-synt_1d"/>
    <property type="match status" value="2"/>
</dbReference>
<dbReference type="PRINTS" id="PR01038">
    <property type="entry name" value="TRNASYNTHARG"/>
</dbReference>
<dbReference type="SMART" id="SM01016">
    <property type="entry name" value="Arg_tRNA_synt_N"/>
    <property type="match status" value="1"/>
</dbReference>
<dbReference type="SMART" id="SM00836">
    <property type="entry name" value="DALR_1"/>
    <property type="match status" value="1"/>
</dbReference>
<dbReference type="SUPFAM" id="SSF47323">
    <property type="entry name" value="Anticodon-binding domain of a subclass of class I aminoacyl-tRNA synthetases"/>
    <property type="match status" value="1"/>
</dbReference>
<dbReference type="SUPFAM" id="SSF55190">
    <property type="entry name" value="Arginyl-tRNA synthetase (ArgRS), N-terminal 'additional' domain"/>
    <property type="match status" value="1"/>
</dbReference>
<dbReference type="SUPFAM" id="SSF52374">
    <property type="entry name" value="Nucleotidylyl transferase"/>
    <property type="match status" value="1"/>
</dbReference>
<dbReference type="PROSITE" id="PS00178">
    <property type="entry name" value="AA_TRNA_LIGASE_I"/>
    <property type="match status" value="1"/>
</dbReference>
<gene>
    <name evidence="1" type="primary">argS</name>
    <name type="ordered locus">TTHA0098</name>
</gene>
<organism>
    <name type="scientific">Thermus thermophilus (strain ATCC 27634 / DSM 579 / HB8)</name>
    <dbReference type="NCBI Taxonomy" id="300852"/>
    <lineage>
        <taxon>Bacteria</taxon>
        <taxon>Thermotogati</taxon>
        <taxon>Deinococcota</taxon>
        <taxon>Deinococci</taxon>
        <taxon>Thermales</taxon>
        <taxon>Thermaceae</taxon>
        <taxon>Thermus</taxon>
    </lineage>
</organism>
<accession>Q5SM45</accession>